<comment type="function">
    <text>Crystallins are the dominant structural components of the vertebrate eye lens.</text>
</comment>
<comment type="subunit">
    <text evidence="1">Homo/heterodimer, or complexes of higher-order. The structure of beta-crystallin oligomers seems to be stabilized through interactions between the N-terminal arms (By similarity).</text>
</comment>
<comment type="domain">
    <text>Has a two-domain beta-structure, folded into four very similar Greek key motifs.</text>
</comment>
<comment type="PTM">
    <text>The N-terminus is blocked.</text>
</comment>
<comment type="similarity">
    <text evidence="3">Belongs to the beta/gamma-crystallin family.</text>
</comment>
<organism>
    <name type="scientific">Aquarana catesbeiana</name>
    <name type="common">American bullfrog</name>
    <name type="synonym">Rana catesbeiana</name>
    <dbReference type="NCBI Taxonomy" id="8400"/>
    <lineage>
        <taxon>Eukaryota</taxon>
        <taxon>Metazoa</taxon>
        <taxon>Chordata</taxon>
        <taxon>Craniata</taxon>
        <taxon>Vertebrata</taxon>
        <taxon>Euteleostomi</taxon>
        <taxon>Amphibia</taxon>
        <taxon>Batrachia</taxon>
        <taxon>Anura</taxon>
        <taxon>Neobatrachia</taxon>
        <taxon>Ranoidea</taxon>
        <taxon>Ranidae</taxon>
        <taxon>Aquarana</taxon>
    </lineage>
</organism>
<feature type="chain" id="PRO_0000057543" description="Beta-crystallin A3-2">
    <location>
        <begin position="1"/>
        <end position="215"/>
    </location>
</feature>
<feature type="domain" description="Beta/gamma crystallin 'Greek key' 1" evidence="2">
    <location>
        <begin position="31"/>
        <end position="70"/>
    </location>
</feature>
<feature type="domain" description="Beta/gamma crystallin 'Greek key' 2" evidence="2">
    <location>
        <begin position="71"/>
        <end position="117"/>
    </location>
</feature>
<feature type="domain" description="Beta/gamma crystallin 'Greek key' 3" evidence="2">
    <location>
        <begin position="124"/>
        <end position="165"/>
    </location>
</feature>
<feature type="domain" description="Beta/gamma crystallin 'Greek key' 4" evidence="2">
    <location>
        <begin position="166"/>
        <end position="214"/>
    </location>
</feature>
<feature type="region of interest" description="N-terminal arm">
    <location>
        <begin position="1"/>
        <end position="30"/>
    </location>
</feature>
<feature type="region of interest" description="Connecting peptide">
    <location>
        <begin position="118"/>
        <end position="123"/>
    </location>
</feature>
<dbReference type="EMBL" id="X87762">
    <property type="protein sequence ID" value="CAA61036.1"/>
    <property type="molecule type" value="mRNA"/>
</dbReference>
<dbReference type="PIR" id="JC4707">
    <property type="entry name" value="S55514"/>
</dbReference>
<dbReference type="SMR" id="Q91317"/>
<dbReference type="GO" id="GO:0005212">
    <property type="term" value="F:structural constituent of eye lens"/>
    <property type="evidence" value="ECO:0007669"/>
    <property type="project" value="UniProtKB-KW"/>
</dbReference>
<dbReference type="GO" id="GO:0002088">
    <property type="term" value="P:lens development in camera-type eye"/>
    <property type="evidence" value="ECO:0007669"/>
    <property type="project" value="TreeGrafter"/>
</dbReference>
<dbReference type="GO" id="GO:0007601">
    <property type="term" value="P:visual perception"/>
    <property type="evidence" value="ECO:0007669"/>
    <property type="project" value="TreeGrafter"/>
</dbReference>
<dbReference type="FunFam" id="2.60.20.10:FF:000004">
    <property type="entry name" value="Crystallin beta A4"/>
    <property type="match status" value="1"/>
</dbReference>
<dbReference type="FunFam" id="2.60.20.10:FF:000002">
    <property type="entry name" value="Crystallin, beta B2"/>
    <property type="match status" value="1"/>
</dbReference>
<dbReference type="Gene3D" id="2.60.20.10">
    <property type="entry name" value="Crystallins"/>
    <property type="match status" value="2"/>
</dbReference>
<dbReference type="InterPro" id="IPR050252">
    <property type="entry name" value="Beta/Gamma-Crystallin"/>
</dbReference>
<dbReference type="InterPro" id="IPR001064">
    <property type="entry name" value="Beta/gamma_crystallin"/>
</dbReference>
<dbReference type="InterPro" id="IPR011024">
    <property type="entry name" value="G_crystallin-like"/>
</dbReference>
<dbReference type="PANTHER" id="PTHR11818:SF8">
    <property type="entry name" value="BETA-CRYSTALLIN A3"/>
    <property type="match status" value="1"/>
</dbReference>
<dbReference type="PANTHER" id="PTHR11818">
    <property type="entry name" value="BETA/GAMMA CRYSTALLIN"/>
    <property type="match status" value="1"/>
</dbReference>
<dbReference type="Pfam" id="PF00030">
    <property type="entry name" value="Crystall"/>
    <property type="match status" value="2"/>
</dbReference>
<dbReference type="PRINTS" id="PR01367">
    <property type="entry name" value="BGCRYSTALLIN"/>
</dbReference>
<dbReference type="SMART" id="SM00247">
    <property type="entry name" value="XTALbg"/>
    <property type="match status" value="2"/>
</dbReference>
<dbReference type="SUPFAM" id="SSF49695">
    <property type="entry name" value="gamma-Crystallin-like"/>
    <property type="match status" value="1"/>
</dbReference>
<dbReference type="PROSITE" id="PS50915">
    <property type="entry name" value="CRYSTALLIN_BETA_GAMMA"/>
    <property type="match status" value="4"/>
</dbReference>
<sequence length="215" mass="25127">MEIPAIQTEREDITSEKMAQINPLPVPLGPWKITVYDQENFQGKRMEFTSSCANIMECGFDNIRSLKVECGAWIGYEHTSFCGQQFVLERGEYPRWDAWSGSNAYHIERLMSFRPICSANHEESKLVIFEKENFIGRQRELCDDYPSLQAMGWGNNEVGSMKVQCGAWVCYQYPGYRGYQYILESDHHGGEYKHWREWGSHAQTFQIQSIRRIQQ</sequence>
<keyword id="KW-0273">Eye lens protein</keyword>
<keyword id="KW-0677">Repeat</keyword>
<protein>
    <recommendedName>
        <fullName>Beta-crystallin A3-2</fullName>
    </recommendedName>
</protein>
<proteinExistence type="evidence at transcript level"/>
<reference key="1">
    <citation type="journal article" date="1996" name="Biochem. Biophys. Res. Commun.">
        <title>Sequence analysis of four acidic beta-crystallin subunits of amphibian lenses: phylogenetic comparison between beta- and gamma-crystallins.</title>
        <authorList>
            <person name="Lu S.-F."/>
            <person name="Pan F.-M."/>
            <person name="Chiou S.-H."/>
        </authorList>
    </citation>
    <scope>NUCLEOTIDE SEQUENCE [MRNA]</scope>
    <source>
        <tissue>Lens</tissue>
    </source>
</reference>
<evidence type="ECO:0000250" key="1"/>
<evidence type="ECO:0000255" key="2">
    <source>
        <dbReference type="PROSITE-ProRule" id="PRU00028"/>
    </source>
</evidence>
<evidence type="ECO:0000305" key="3"/>
<accession>Q91317</accession>
<name>CRB32_AQUCT</name>